<dbReference type="EC" id="6.3.4.21" evidence="1"/>
<dbReference type="EMBL" id="AL590842">
    <property type="protein sequence ID" value="CAL20065.1"/>
    <property type="molecule type" value="Genomic_DNA"/>
</dbReference>
<dbReference type="EMBL" id="AE009952">
    <property type="protein sequence ID" value="AAM86309.1"/>
    <property type="status" value="ALT_INIT"/>
    <property type="molecule type" value="Genomic_DNA"/>
</dbReference>
<dbReference type="EMBL" id="AE017042">
    <property type="protein sequence ID" value="AAS61423.1"/>
    <property type="status" value="ALT_INIT"/>
    <property type="molecule type" value="Genomic_DNA"/>
</dbReference>
<dbReference type="PIR" id="AG0172">
    <property type="entry name" value="AG0172"/>
</dbReference>
<dbReference type="RefSeq" id="WP_002228013.1">
    <property type="nucleotide sequence ID" value="NZ_WUCM01000086.1"/>
</dbReference>
<dbReference type="RefSeq" id="YP_002346436.1">
    <property type="nucleotide sequence ID" value="NC_003143.1"/>
</dbReference>
<dbReference type="PDB" id="3OS4">
    <property type="method" value="X-ray"/>
    <property type="resolution" value="1.60 A"/>
    <property type="chains" value="A/B=1-401"/>
</dbReference>
<dbReference type="PDBsum" id="3OS4"/>
<dbReference type="SMR" id="Q8ZG93"/>
<dbReference type="STRING" id="214092.YPO1413"/>
<dbReference type="PaxDb" id="214092-YPO1413"/>
<dbReference type="DNASU" id="1147704"/>
<dbReference type="EnsemblBacteria" id="AAS61423">
    <property type="protein sequence ID" value="AAS61423"/>
    <property type="gene ID" value="YP_1180"/>
</dbReference>
<dbReference type="GeneID" id="57977209"/>
<dbReference type="KEGG" id="ype:YPO1413"/>
<dbReference type="KEGG" id="ypk:y2757"/>
<dbReference type="KEGG" id="ypm:YP_1180"/>
<dbReference type="PATRIC" id="fig|214092.21.peg.1740"/>
<dbReference type="eggNOG" id="COG1488">
    <property type="taxonomic scope" value="Bacteria"/>
</dbReference>
<dbReference type="HOGENOM" id="CLU_030991_1_0_6"/>
<dbReference type="OMA" id="IEHCLEY"/>
<dbReference type="OrthoDB" id="9771406at2"/>
<dbReference type="UniPathway" id="UPA00253">
    <property type="reaction ID" value="UER00457"/>
</dbReference>
<dbReference type="EvolutionaryTrace" id="Q8ZG93"/>
<dbReference type="Proteomes" id="UP000000815">
    <property type="component" value="Chromosome"/>
</dbReference>
<dbReference type="Proteomes" id="UP000001019">
    <property type="component" value="Chromosome"/>
</dbReference>
<dbReference type="Proteomes" id="UP000002490">
    <property type="component" value="Chromosome"/>
</dbReference>
<dbReference type="GO" id="GO:0005829">
    <property type="term" value="C:cytosol"/>
    <property type="evidence" value="ECO:0000318"/>
    <property type="project" value="GO_Central"/>
</dbReference>
<dbReference type="GO" id="GO:0004516">
    <property type="term" value="F:nicotinate phosphoribosyltransferase activity"/>
    <property type="evidence" value="ECO:0000318"/>
    <property type="project" value="GO_Central"/>
</dbReference>
<dbReference type="GO" id="GO:0034355">
    <property type="term" value="P:NAD biosynthetic process via the salvage pathway"/>
    <property type="evidence" value="ECO:0000318"/>
    <property type="project" value="GO_Central"/>
</dbReference>
<dbReference type="CDD" id="cd01401">
    <property type="entry name" value="PncB_like"/>
    <property type="match status" value="1"/>
</dbReference>
<dbReference type="FunFam" id="3.20.140.10:FF:000001">
    <property type="entry name" value="Nicotinate phosphoribosyltransferase"/>
    <property type="match status" value="1"/>
</dbReference>
<dbReference type="Gene3D" id="3.20.140.10">
    <property type="entry name" value="nicotinate phosphoribosyltransferase"/>
    <property type="match status" value="1"/>
</dbReference>
<dbReference type="HAMAP" id="MF_00570">
    <property type="entry name" value="NAPRTase"/>
    <property type="match status" value="1"/>
</dbReference>
<dbReference type="InterPro" id="IPR041525">
    <property type="entry name" value="N/Namide_PRibTrfase"/>
</dbReference>
<dbReference type="InterPro" id="IPR040727">
    <property type="entry name" value="NAPRTase_N"/>
</dbReference>
<dbReference type="InterPro" id="IPR006406">
    <property type="entry name" value="Nic_PRibTrfase"/>
</dbReference>
<dbReference type="InterPro" id="IPR007229">
    <property type="entry name" value="Nic_PRibTrfase-Fam"/>
</dbReference>
<dbReference type="InterPro" id="IPR036068">
    <property type="entry name" value="Nicotinate_pribotase-like_C"/>
</dbReference>
<dbReference type="NCBIfam" id="TIGR01514">
    <property type="entry name" value="NAPRTase"/>
    <property type="match status" value="1"/>
</dbReference>
<dbReference type="NCBIfam" id="NF003704">
    <property type="entry name" value="PRK05321.1"/>
    <property type="match status" value="1"/>
</dbReference>
<dbReference type="PANTHER" id="PTHR11098">
    <property type="entry name" value="NICOTINATE PHOSPHORIBOSYLTRANSFERASE"/>
    <property type="match status" value="1"/>
</dbReference>
<dbReference type="PANTHER" id="PTHR11098:SF1">
    <property type="entry name" value="NICOTINATE PHOSPHORIBOSYLTRANSFERASE"/>
    <property type="match status" value="1"/>
</dbReference>
<dbReference type="Pfam" id="PF04095">
    <property type="entry name" value="NAPRTase"/>
    <property type="match status" value="1"/>
</dbReference>
<dbReference type="Pfam" id="PF17767">
    <property type="entry name" value="NAPRTase_N"/>
    <property type="match status" value="1"/>
</dbReference>
<dbReference type="PIRSF" id="PIRSF000484">
    <property type="entry name" value="NAPRT"/>
    <property type="match status" value="1"/>
</dbReference>
<dbReference type="SUPFAM" id="SSF51690">
    <property type="entry name" value="Nicotinate/Quinolinate PRTase C-terminal domain-like"/>
    <property type="match status" value="1"/>
</dbReference>
<dbReference type="SUPFAM" id="SSF54675">
    <property type="entry name" value="Nicotinate/Quinolinate PRTase N-terminal domain-like"/>
    <property type="match status" value="1"/>
</dbReference>
<sequence length="401" mass="46022">MTQDASPILTSLLDTDAYKLHMQQAVFHHYRHITVAAEFRCRSDELLGVYADEIRHQVTLMGQLALTSDEFIYLSSLPFFQDDYLHWLRDFRFKPEQVSVAVHDGKLDIRIAGLWCEVIMWEVPLLAVISEIVHRRRSTQVTTDQAVQQLRTKLEQFNALSADIDITHFKLMDFGTRRRFSREIQHTVVSTLKDEFPYLVGTSNYDLARTLALAPVGTQAHEWFQAHQQISPTLANSQRVALQVWLDEYPNQLGIALTDCITMDAFLRDFDLAFANRYQGLRHDSGDPIEWGEKAIAHYEKLGIDPMKKVLVFSDNLDLEKALFLYRHFYQRIKLVFGIGTRLTCDIPDVKPLNIVIKLVECNDKPVAKLSDSPGKTICQDPAFVDQLRKAFALPLVKKAS</sequence>
<comment type="function">
    <text evidence="1">Catalyzes the synthesis of beta-nicotinate D-ribonucleotide from nicotinate and 5-phospho-D-ribose 1-phosphate at the expense of ATP.</text>
</comment>
<comment type="catalytic activity">
    <reaction evidence="1">
        <text>nicotinate + 5-phospho-alpha-D-ribose 1-diphosphate + ATP + H2O = nicotinate beta-D-ribonucleotide + ADP + phosphate + diphosphate</text>
        <dbReference type="Rhea" id="RHEA:36163"/>
        <dbReference type="ChEBI" id="CHEBI:15377"/>
        <dbReference type="ChEBI" id="CHEBI:30616"/>
        <dbReference type="ChEBI" id="CHEBI:32544"/>
        <dbReference type="ChEBI" id="CHEBI:33019"/>
        <dbReference type="ChEBI" id="CHEBI:43474"/>
        <dbReference type="ChEBI" id="CHEBI:57502"/>
        <dbReference type="ChEBI" id="CHEBI:58017"/>
        <dbReference type="ChEBI" id="CHEBI:456216"/>
        <dbReference type="EC" id="6.3.4.21"/>
    </reaction>
</comment>
<comment type="pathway">
    <text evidence="1">Cofactor biosynthesis; NAD(+) biosynthesis; nicotinate D-ribonucleotide from nicotinate: step 1/1.</text>
</comment>
<comment type="PTM">
    <text evidence="1">Transiently phosphorylated on a His residue during the reaction cycle. Phosphorylation strongly increases the affinity for substrates and increases the rate of nicotinate D-ribonucleotide production. Dephosphorylation regenerates the low-affinity form of the enzyme, leading to product release.</text>
</comment>
<comment type="similarity">
    <text evidence="1">Belongs to the NAPRTase family.</text>
</comment>
<comment type="sequence caution" evidence="2">
    <conflict type="erroneous initiation">
        <sequence resource="EMBL-CDS" id="AAM86309"/>
    </conflict>
    <text>Extended N-terminus.</text>
</comment>
<comment type="sequence caution" evidence="2">
    <conflict type="erroneous initiation">
        <sequence resource="EMBL-CDS" id="AAS61423"/>
    </conflict>
    <text>Extended N-terminus.</text>
</comment>
<protein>
    <recommendedName>
        <fullName evidence="1">Nicotinate phosphoribosyltransferase</fullName>
        <shortName evidence="1">NAPRTase</shortName>
        <ecNumber evidence="1">6.3.4.21</ecNumber>
    </recommendedName>
</protein>
<feature type="chain" id="PRO_0000205855" description="Nicotinate phosphoribosyltransferase">
    <location>
        <begin position="1"/>
        <end position="401"/>
    </location>
</feature>
<feature type="modified residue" description="Phosphohistidine; by autocatalysis" evidence="1">
    <location>
        <position position="221"/>
    </location>
</feature>
<feature type="strand" evidence="3">
    <location>
        <begin position="14"/>
        <end position="16"/>
    </location>
</feature>
<feature type="helix" evidence="3">
    <location>
        <begin position="17"/>
        <end position="29"/>
    </location>
</feature>
<feature type="strand" evidence="3">
    <location>
        <begin position="34"/>
        <end position="41"/>
    </location>
</feature>
<feature type="helix" evidence="3">
    <location>
        <begin position="48"/>
        <end position="50"/>
    </location>
</feature>
<feature type="helix" evidence="3">
    <location>
        <begin position="51"/>
        <end position="61"/>
    </location>
</feature>
<feature type="helix" evidence="3">
    <location>
        <begin position="68"/>
        <end position="75"/>
    </location>
</feature>
<feature type="strand" evidence="3">
    <location>
        <begin position="77"/>
        <end position="79"/>
    </location>
</feature>
<feature type="helix" evidence="3">
    <location>
        <begin position="82"/>
        <end position="90"/>
    </location>
</feature>
<feature type="helix" evidence="3">
    <location>
        <begin position="95"/>
        <end position="97"/>
    </location>
</feature>
<feature type="strand" evidence="3">
    <location>
        <begin position="98"/>
        <end position="103"/>
    </location>
</feature>
<feature type="strand" evidence="3">
    <location>
        <begin position="106"/>
        <end position="114"/>
    </location>
</feature>
<feature type="helix" evidence="3">
    <location>
        <begin position="115"/>
        <end position="118"/>
    </location>
</feature>
<feature type="helix" evidence="3">
    <location>
        <begin position="122"/>
        <end position="137"/>
    </location>
</feature>
<feature type="helix" evidence="3">
    <location>
        <begin position="143"/>
        <end position="160"/>
    </location>
</feature>
<feature type="turn" evidence="3">
    <location>
        <begin position="161"/>
        <end position="163"/>
    </location>
</feature>
<feature type="strand" evidence="3">
    <location>
        <begin position="171"/>
        <end position="173"/>
    </location>
</feature>
<feature type="helix" evidence="3">
    <location>
        <begin position="182"/>
        <end position="195"/>
    </location>
</feature>
<feature type="strand" evidence="3">
    <location>
        <begin position="199"/>
        <end position="204"/>
    </location>
</feature>
<feature type="helix" evidence="3">
    <location>
        <begin position="205"/>
        <end position="211"/>
    </location>
</feature>
<feature type="helix" evidence="3">
    <location>
        <begin position="221"/>
        <end position="227"/>
    </location>
</feature>
<feature type="turn" evidence="3">
    <location>
        <begin position="228"/>
        <end position="230"/>
    </location>
</feature>
<feature type="strand" evidence="3">
    <location>
        <begin position="231"/>
        <end position="233"/>
    </location>
</feature>
<feature type="helix" evidence="3">
    <location>
        <begin position="234"/>
        <end position="236"/>
    </location>
</feature>
<feature type="helix" evidence="3">
    <location>
        <begin position="237"/>
        <end position="248"/>
    </location>
</feature>
<feature type="strand" evidence="3">
    <location>
        <begin position="250"/>
        <end position="253"/>
    </location>
</feature>
<feature type="strand" evidence="3">
    <location>
        <begin position="255"/>
        <end position="257"/>
    </location>
</feature>
<feature type="helix" evidence="3">
    <location>
        <begin position="263"/>
        <end position="269"/>
    </location>
</feature>
<feature type="helix" evidence="3">
    <location>
        <begin position="272"/>
        <end position="277"/>
    </location>
</feature>
<feature type="strand" evidence="3">
    <location>
        <begin position="280"/>
        <end position="283"/>
    </location>
</feature>
<feature type="helix" evidence="3">
    <location>
        <begin position="288"/>
        <end position="301"/>
    </location>
</feature>
<feature type="helix" evidence="3">
    <location>
        <begin position="306"/>
        <end position="308"/>
    </location>
</feature>
<feature type="strand" evidence="3">
    <location>
        <begin position="309"/>
        <end position="313"/>
    </location>
</feature>
<feature type="helix" evidence="3">
    <location>
        <begin position="319"/>
        <end position="329"/>
    </location>
</feature>
<feature type="turn" evidence="3">
    <location>
        <begin position="330"/>
        <end position="332"/>
    </location>
</feature>
<feature type="strand" evidence="3">
    <location>
        <begin position="333"/>
        <end position="339"/>
    </location>
</feature>
<feature type="helix" evidence="3">
    <location>
        <begin position="341"/>
        <end position="344"/>
    </location>
</feature>
<feature type="strand" evidence="3">
    <location>
        <begin position="355"/>
        <end position="362"/>
    </location>
</feature>
<feature type="helix" evidence="3">
    <location>
        <begin position="382"/>
        <end position="391"/>
    </location>
</feature>
<reference key="1">
    <citation type="journal article" date="2001" name="Nature">
        <title>Genome sequence of Yersinia pestis, the causative agent of plague.</title>
        <authorList>
            <person name="Parkhill J."/>
            <person name="Wren B.W."/>
            <person name="Thomson N.R."/>
            <person name="Titball R.W."/>
            <person name="Holden M.T.G."/>
            <person name="Prentice M.B."/>
            <person name="Sebaihia M."/>
            <person name="James K.D."/>
            <person name="Churcher C.M."/>
            <person name="Mungall K.L."/>
            <person name="Baker S."/>
            <person name="Basham D."/>
            <person name="Bentley S.D."/>
            <person name="Brooks K."/>
            <person name="Cerdeno-Tarraga A.-M."/>
            <person name="Chillingworth T."/>
            <person name="Cronin A."/>
            <person name="Davies R.M."/>
            <person name="Davis P."/>
            <person name="Dougan G."/>
            <person name="Feltwell T."/>
            <person name="Hamlin N."/>
            <person name="Holroyd S."/>
            <person name="Jagels K."/>
            <person name="Karlyshev A.V."/>
            <person name="Leather S."/>
            <person name="Moule S."/>
            <person name="Oyston P.C.F."/>
            <person name="Quail M.A."/>
            <person name="Rutherford K.M."/>
            <person name="Simmonds M."/>
            <person name="Skelton J."/>
            <person name="Stevens K."/>
            <person name="Whitehead S."/>
            <person name="Barrell B.G."/>
        </authorList>
    </citation>
    <scope>NUCLEOTIDE SEQUENCE [LARGE SCALE GENOMIC DNA]</scope>
    <source>
        <strain>CO-92 / Biovar Orientalis</strain>
    </source>
</reference>
<reference key="2">
    <citation type="journal article" date="2002" name="J. Bacteriol.">
        <title>Genome sequence of Yersinia pestis KIM.</title>
        <authorList>
            <person name="Deng W."/>
            <person name="Burland V."/>
            <person name="Plunkett G. III"/>
            <person name="Boutin A."/>
            <person name="Mayhew G.F."/>
            <person name="Liss P."/>
            <person name="Perna N.T."/>
            <person name="Rose D.J."/>
            <person name="Mau B."/>
            <person name="Zhou S."/>
            <person name="Schwartz D.C."/>
            <person name="Fetherston J.D."/>
            <person name="Lindler L.E."/>
            <person name="Brubaker R.R."/>
            <person name="Plano G.V."/>
            <person name="Straley S.C."/>
            <person name="McDonough K.A."/>
            <person name="Nilles M.L."/>
            <person name="Matson J.S."/>
            <person name="Blattner F.R."/>
            <person name="Perry R.D."/>
        </authorList>
    </citation>
    <scope>NUCLEOTIDE SEQUENCE [LARGE SCALE GENOMIC DNA]</scope>
    <source>
        <strain>KIM10+ / Biovar Mediaevalis</strain>
    </source>
</reference>
<reference key="3">
    <citation type="journal article" date="2004" name="DNA Res.">
        <title>Complete genome sequence of Yersinia pestis strain 91001, an isolate avirulent to humans.</title>
        <authorList>
            <person name="Song Y."/>
            <person name="Tong Z."/>
            <person name="Wang J."/>
            <person name="Wang L."/>
            <person name="Guo Z."/>
            <person name="Han Y."/>
            <person name="Zhang J."/>
            <person name="Pei D."/>
            <person name="Zhou D."/>
            <person name="Qin H."/>
            <person name="Pang X."/>
            <person name="Han Y."/>
            <person name="Zhai J."/>
            <person name="Li M."/>
            <person name="Cui B."/>
            <person name="Qi Z."/>
            <person name="Jin L."/>
            <person name="Dai R."/>
            <person name="Chen F."/>
            <person name="Li S."/>
            <person name="Ye C."/>
            <person name="Du Z."/>
            <person name="Lin W."/>
            <person name="Wang J."/>
            <person name="Yu J."/>
            <person name="Yang H."/>
            <person name="Wang J."/>
            <person name="Huang P."/>
            <person name="Yang R."/>
        </authorList>
    </citation>
    <scope>NUCLEOTIDE SEQUENCE [LARGE SCALE GENOMIC DNA]</scope>
    <source>
        <strain>91001 / Biovar Mediaevalis</strain>
    </source>
</reference>
<gene>
    <name evidence="1" type="primary">pncB</name>
    <name type="ordered locus">YPO1413</name>
    <name type="ordered locus">y2757</name>
    <name type="ordered locus">YP_1180</name>
</gene>
<keyword id="KW-0002">3D-structure</keyword>
<keyword id="KW-0436">Ligase</keyword>
<keyword id="KW-0597">Phosphoprotein</keyword>
<keyword id="KW-0662">Pyridine nucleotide biosynthesis</keyword>
<keyword id="KW-1185">Reference proteome</keyword>
<name>PNCB_YERPE</name>
<accession>Q8ZG93</accession>
<accession>Q0WH02</accession>
<organism>
    <name type="scientific">Yersinia pestis</name>
    <dbReference type="NCBI Taxonomy" id="632"/>
    <lineage>
        <taxon>Bacteria</taxon>
        <taxon>Pseudomonadati</taxon>
        <taxon>Pseudomonadota</taxon>
        <taxon>Gammaproteobacteria</taxon>
        <taxon>Enterobacterales</taxon>
        <taxon>Yersiniaceae</taxon>
        <taxon>Yersinia</taxon>
    </lineage>
</organism>
<proteinExistence type="evidence at protein level"/>
<evidence type="ECO:0000255" key="1">
    <source>
        <dbReference type="HAMAP-Rule" id="MF_00570"/>
    </source>
</evidence>
<evidence type="ECO:0000305" key="2"/>
<evidence type="ECO:0007829" key="3">
    <source>
        <dbReference type="PDB" id="3OS4"/>
    </source>
</evidence>